<reference key="1">
    <citation type="journal article" date="2004" name="Proc. Natl. Acad. Sci. U.S.A.">
        <title>Genome sequence of the enterobacterial phytopathogen Erwinia carotovora subsp. atroseptica and characterization of virulence factors.</title>
        <authorList>
            <person name="Bell K.S."/>
            <person name="Sebaihia M."/>
            <person name="Pritchard L."/>
            <person name="Holden M.T.G."/>
            <person name="Hyman L.J."/>
            <person name="Holeva M.C."/>
            <person name="Thomson N.R."/>
            <person name="Bentley S.D."/>
            <person name="Churcher L.J.C."/>
            <person name="Mungall K."/>
            <person name="Atkin R."/>
            <person name="Bason N."/>
            <person name="Brooks K."/>
            <person name="Chillingworth T."/>
            <person name="Clark K."/>
            <person name="Doggett J."/>
            <person name="Fraser A."/>
            <person name="Hance Z."/>
            <person name="Hauser H."/>
            <person name="Jagels K."/>
            <person name="Moule S."/>
            <person name="Norbertczak H."/>
            <person name="Ormond D."/>
            <person name="Price C."/>
            <person name="Quail M.A."/>
            <person name="Sanders M."/>
            <person name="Walker D."/>
            <person name="Whitehead S."/>
            <person name="Salmond G.P.C."/>
            <person name="Birch P.R.J."/>
            <person name="Parkhill J."/>
            <person name="Toth I.K."/>
        </authorList>
    </citation>
    <scope>NUCLEOTIDE SEQUENCE [LARGE SCALE GENOMIC DNA]</scope>
    <source>
        <strain>SCRI 1043 / ATCC BAA-672</strain>
    </source>
</reference>
<organism>
    <name type="scientific">Pectobacterium atrosepticum (strain SCRI 1043 / ATCC BAA-672)</name>
    <name type="common">Erwinia carotovora subsp. atroseptica</name>
    <dbReference type="NCBI Taxonomy" id="218491"/>
    <lineage>
        <taxon>Bacteria</taxon>
        <taxon>Pseudomonadati</taxon>
        <taxon>Pseudomonadota</taxon>
        <taxon>Gammaproteobacteria</taxon>
        <taxon>Enterobacterales</taxon>
        <taxon>Pectobacteriaceae</taxon>
        <taxon>Pectobacterium</taxon>
    </lineage>
</organism>
<accession>Q6D6E0</accession>
<feature type="chain" id="PRO_0000056544" description="Betaine aldehyde dehydrogenase">
    <location>
        <begin position="1"/>
        <end position="490"/>
    </location>
</feature>
<feature type="active site" description="Charge relay system" evidence="1">
    <location>
        <position position="162"/>
    </location>
</feature>
<feature type="active site" description="Proton acceptor" evidence="1">
    <location>
        <position position="252"/>
    </location>
</feature>
<feature type="active site" description="Nucleophile" evidence="1">
    <location>
        <position position="286"/>
    </location>
</feature>
<feature type="active site" description="Charge relay system" evidence="1">
    <location>
        <position position="464"/>
    </location>
</feature>
<feature type="binding site" evidence="1">
    <location>
        <position position="93"/>
    </location>
    <ligand>
        <name>K(+)</name>
        <dbReference type="ChEBI" id="CHEBI:29103"/>
        <label>1</label>
    </ligand>
</feature>
<feature type="binding site" evidence="1">
    <location>
        <begin position="150"/>
        <end position="152"/>
    </location>
    <ligand>
        <name>NAD(+)</name>
        <dbReference type="ChEBI" id="CHEBI:57540"/>
    </ligand>
</feature>
<feature type="binding site" evidence="1">
    <location>
        <begin position="176"/>
        <end position="179"/>
    </location>
    <ligand>
        <name>NAD(+)</name>
        <dbReference type="ChEBI" id="CHEBI:57540"/>
    </ligand>
</feature>
<feature type="binding site" evidence="1">
    <location>
        <position position="180"/>
    </location>
    <ligand>
        <name>K(+)</name>
        <dbReference type="ChEBI" id="CHEBI:29103"/>
        <label>1</label>
    </ligand>
</feature>
<feature type="binding site" evidence="1">
    <location>
        <begin position="230"/>
        <end position="233"/>
    </location>
    <ligand>
        <name>NAD(+)</name>
        <dbReference type="ChEBI" id="CHEBI:57540"/>
    </ligand>
</feature>
<feature type="binding site" evidence="1">
    <location>
        <position position="246"/>
    </location>
    <ligand>
        <name>K(+)</name>
        <dbReference type="ChEBI" id="CHEBI:29103"/>
        <label>2</label>
    </ligand>
</feature>
<feature type="binding site" evidence="1">
    <location>
        <position position="254"/>
    </location>
    <ligand>
        <name>NAD(+)</name>
        <dbReference type="ChEBI" id="CHEBI:57540"/>
    </ligand>
</feature>
<feature type="binding site" description="covalent" evidence="1">
    <location>
        <position position="286"/>
    </location>
    <ligand>
        <name>NAD(+)</name>
        <dbReference type="ChEBI" id="CHEBI:57540"/>
    </ligand>
</feature>
<feature type="binding site" evidence="1">
    <location>
        <position position="387"/>
    </location>
    <ligand>
        <name>NAD(+)</name>
        <dbReference type="ChEBI" id="CHEBI:57540"/>
    </ligand>
</feature>
<feature type="binding site" evidence="1">
    <location>
        <position position="457"/>
    </location>
    <ligand>
        <name>K(+)</name>
        <dbReference type="ChEBI" id="CHEBI:29103"/>
        <label>2</label>
    </ligand>
</feature>
<feature type="binding site" evidence="1">
    <location>
        <position position="460"/>
    </location>
    <ligand>
        <name>K(+)</name>
        <dbReference type="ChEBI" id="CHEBI:29103"/>
        <label>2</label>
    </ligand>
</feature>
<feature type="site" description="Seems to be a necessary countercharge to the potassium cations" evidence="1">
    <location>
        <position position="248"/>
    </location>
</feature>
<feature type="modified residue" description="Cysteine sulfenic acid (-SOH)" evidence="1">
    <location>
        <position position="286"/>
    </location>
</feature>
<protein>
    <recommendedName>
        <fullName evidence="1">Betaine aldehyde dehydrogenase</fullName>
        <shortName evidence="1">BADH</shortName>
        <ecNumber evidence="1">1.2.1.8</ecNumber>
    </recommendedName>
</protein>
<dbReference type="EC" id="1.2.1.8" evidence="1"/>
<dbReference type="EMBL" id="BX950851">
    <property type="protein sequence ID" value="CAG74650.1"/>
    <property type="molecule type" value="Genomic_DNA"/>
</dbReference>
<dbReference type="RefSeq" id="WP_011093321.1">
    <property type="nucleotide sequence ID" value="NC_004547.2"/>
</dbReference>
<dbReference type="SMR" id="Q6D6E0"/>
<dbReference type="STRING" id="218491.ECA1745"/>
<dbReference type="KEGG" id="eca:ECA1745"/>
<dbReference type="PATRIC" id="fig|218491.5.peg.1772"/>
<dbReference type="eggNOG" id="COG1012">
    <property type="taxonomic scope" value="Bacteria"/>
</dbReference>
<dbReference type="HOGENOM" id="CLU_005391_0_0_6"/>
<dbReference type="OrthoDB" id="9812625at2"/>
<dbReference type="UniPathway" id="UPA00529">
    <property type="reaction ID" value="UER00386"/>
</dbReference>
<dbReference type="Proteomes" id="UP000007966">
    <property type="component" value="Chromosome"/>
</dbReference>
<dbReference type="GO" id="GO:0008802">
    <property type="term" value="F:betaine-aldehyde dehydrogenase (NAD+) activity"/>
    <property type="evidence" value="ECO:0007669"/>
    <property type="project" value="UniProtKB-UniRule"/>
</dbReference>
<dbReference type="GO" id="GO:0046872">
    <property type="term" value="F:metal ion binding"/>
    <property type="evidence" value="ECO:0007669"/>
    <property type="project" value="UniProtKB-KW"/>
</dbReference>
<dbReference type="GO" id="GO:0019285">
    <property type="term" value="P:glycine betaine biosynthetic process from choline"/>
    <property type="evidence" value="ECO:0007669"/>
    <property type="project" value="UniProtKB-UniRule"/>
</dbReference>
<dbReference type="CDD" id="cd07090">
    <property type="entry name" value="ALDH_F9_TMBADH"/>
    <property type="match status" value="1"/>
</dbReference>
<dbReference type="FunFam" id="3.40.309.10:FF:000014">
    <property type="entry name" value="NAD/NADP-dependent betaine aldehyde dehydrogenase"/>
    <property type="match status" value="1"/>
</dbReference>
<dbReference type="FunFam" id="3.40.605.10:FF:000007">
    <property type="entry name" value="NAD/NADP-dependent betaine aldehyde dehydrogenase"/>
    <property type="match status" value="1"/>
</dbReference>
<dbReference type="Gene3D" id="3.40.605.10">
    <property type="entry name" value="Aldehyde Dehydrogenase, Chain A, domain 1"/>
    <property type="match status" value="1"/>
</dbReference>
<dbReference type="Gene3D" id="3.40.309.10">
    <property type="entry name" value="Aldehyde Dehydrogenase, Chain A, domain 2"/>
    <property type="match status" value="1"/>
</dbReference>
<dbReference type="HAMAP" id="MF_00804">
    <property type="entry name" value="BADH"/>
    <property type="match status" value="1"/>
</dbReference>
<dbReference type="InterPro" id="IPR016161">
    <property type="entry name" value="Ald_DH/histidinol_DH"/>
</dbReference>
<dbReference type="InterPro" id="IPR016163">
    <property type="entry name" value="Ald_DH_C"/>
</dbReference>
<dbReference type="InterPro" id="IPR016160">
    <property type="entry name" value="Ald_DH_CS_CYS"/>
</dbReference>
<dbReference type="InterPro" id="IPR029510">
    <property type="entry name" value="Ald_DH_CS_GLU"/>
</dbReference>
<dbReference type="InterPro" id="IPR016162">
    <property type="entry name" value="Ald_DH_N"/>
</dbReference>
<dbReference type="InterPro" id="IPR015590">
    <property type="entry name" value="Aldehyde_DH_dom"/>
</dbReference>
<dbReference type="InterPro" id="IPR011264">
    <property type="entry name" value="BADH"/>
</dbReference>
<dbReference type="NCBIfam" id="TIGR01804">
    <property type="entry name" value="BADH"/>
    <property type="match status" value="1"/>
</dbReference>
<dbReference type="NCBIfam" id="NF009725">
    <property type="entry name" value="PRK13252.1"/>
    <property type="match status" value="1"/>
</dbReference>
<dbReference type="PANTHER" id="PTHR11699">
    <property type="entry name" value="ALDEHYDE DEHYDROGENASE-RELATED"/>
    <property type="match status" value="1"/>
</dbReference>
<dbReference type="Pfam" id="PF00171">
    <property type="entry name" value="Aldedh"/>
    <property type="match status" value="1"/>
</dbReference>
<dbReference type="SUPFAM" id="SSF53720">
    <property type="entry name" value="ALDH-like"/>
    <property type="match status" value="1"/>
</dbReference>
<dbReference type="PROSITE" id="PS00070">
    <property type="entry name" value="ALDEHYDE_DEHYDR_CYS"/>
    <property type="match status" value="1"/>
</dbReference>
<dbReference type="PROSITE" id="PS00687">
    <property type="entry name" value="ALDEHYDE_DEHYDR_GLU"/>
    <property type="match status" value="1"/>
</dbReference>
<sequence>MSRYGLQQLYINGAYVDSTGNDTFDAVNPANGDIIACIQSATAADVDRAVSAATAGQKVWAAMTAMERSRILRRAVDILRERNDELALLETHDTGKPLSETRTVDIVTGADVLEYYAGLIPMLEGQQIPLRDTSFVYTRREPLGVVAGIGAWNYPIQIALWKSAPALAAGNAMIFKPSEVTSLTALKLAEIYTEAGLPAGVFNVLTGTGKSVGQALTTHPGIAKVSFTGGIASGKTVMANAAGSTLKDVTMELGGKSPLIIFDDADLDKAADIAMMANFFSSGQVCTNGTRVFVPKALQAQFEEKILACVQRIRAGDPTDESVNFGPLVSFPHRESVLRYIESGKREGARVLVGGEPMTDGDYAQGAYVAPTVFTDCRDDMKIVRKEIFGPVMSILTYQDEDEVIRRANDSEYGLAAGIVTRDLNRAHRVIHQLEAGICWINTWGESPAEMPVGGYKHSGVGRENGVTTLEHYTQIKSIQVELGEFRSVF</sequence>
<comment type="function">
    <text evidence="1">Involved in the biosynthesis of the osmoprotectant glycine betaine. Catalyzes the irreversible oxidation of betaine aldehyde to the corresponding acid.</text>
</comment>
<comment type="catalytic activity">
    <reaction evidence="1">
        <text>betaine aldehyde + NAD(+) + H2O = glycine betaine + NADH + 2 H(+)</text>
        <dbReference type="Rhea" id="RHEA:15305"/>
        <dbReference type="ChEBI" id="CHEBI:15377"/>
        <dbReference type="ChEBI" id="CHEBI:15378"/>
        <dbReference type="ChEBI" id="CHEBI:15710"/>
        <dbReference type="ChEBI" id="CHEBI:17750"/>
        <dbReference type="ChEBI" id="CHEBI:57540"/>
        <dbReference type="ChEBI" id="CHEBI:57945"/>
        <dbReference type="EC" id="1.2.1.8"/>
    </reaction>
    <physiologicalReaction direction="left-to-right" evidence="1">
        <dbReference type="Rhea" id="RHEA:15306"/>
    </physiologicalReaction>
</comment>
<comment type="cofactor">
    <cofactor evidence="1">
        <name>K(+)</name>
        <dbReference type="ChEBI" id="CHEBI:29103"/>
    </cofactor>
    <text evidence="1">Binds 2 potassium ions per subunit.</text>
</comment>
<comment type="pathway">
    <text evidence="1">Amine and polyamine biosynthesis; betaine biosynthesis via choline pathway; betaine from betaine aldehyde: step 1/1.</text>
</comment>
<comment type="subunit">
    <text evidence="1">Dimer of dimers.</text>
</comment>
<comment type="similarity">
    <text evidence="1">Belongs to the aldehyde dehydrogenase family.</text>
</comment>
<proteinExistence type="inferred from homology"/>
<gene>
    <name evidence="1" type="primary">betB</name>
    <name type="ordered locus">ECA1745</name>
</gene>
<name>BETB_PECAS</name>
<evidence type="ECO:0000255" key="1">
    <source>
        <dbReference type="HAMAP-Rule" id="MF_00804"/>
    </source>
</evidence>
<keyword id="KW-0479">Metal-binding</keyword>
<keyword id="KW-0520">NAD</keyword>
<keyword id="KW-0521">NADP</keyword>
<keyword id="KW-0558">Oxidation</keyword>
<keyword id="KW-0560">Oxidoreductase</keyword>
<keyword id="KW-0630">Potassium</keyword>
<keyword id="KW-1185">Reference proteome</keyword>